<reference key="1">
    <citation type="journal article" date="2002" name="Nature">
        <title>Complete genome sequence of the model actinomycete Streptomyces coelicolor A3(2).</title>
        <authorList>
            <person name="Bentley S.D."/>
            <person name="Chater K.F."/>
            <person name="Cerdeno-Tarraga A.-M."/>
            <person name="Challis G.L."/>
            <person name="Thomson N.R."/>
            <person name="James K.D."/>
            <person name="Harris D.E."/>
            <person name="Quail M.A."/>
            <person name="Kieser H."/>
            <person name="Harper D."/>
            <person name="Bateman A."/>
            <person name="Brown S."/>
            <person name="Chandra G."/>
            <person name="Chen C.W."/>
            <person name="Collins M."/>
            <person name="Cronin A."/>
            <person name="Fraser A."/>
            <person name="Goble A."/>
            <person name="Hidalgo J."/>
            <person name="Hornsby T."/>
            <person name="Howarth S."/>
            <person name="Huang C.-H."/>
            <person name="Kieser T."/>
            <person name="Larke L."/>
            <person name="Murphy L.D."/>
            <person name="Oliver K."/>
            <person name="O'Neil S."/>
            <person name="Rabbinowitsch E."/>
            <person name="Rajandream M.A."/>
            <person name="Rutherford K.M."/>
            <person name="Rutter S."/>
            <person name="Seeger K."/>
            <person name="Saunders D."/>
            <person name="Sharp S."/>
            <person name="Squares R."/>
            <person name="Squares S."/>
            <person name="Taylor K."/>
            <person name="Warren T."/>
            <person name="Wietzorrek A."/>
            <person name="Woodward J.R."/>
            <person name="Barrell B.G."/>
            <person name="Parkhill J."/>
            <person name="Hopwood D.A."/>
        </authorList>
    </citation>
    <scope>NUCLEOTIDE SEQUENCE [LARGE SCALE GENOMIC DNA]</scope>
    <source>
        <strain>ATCC BAA-471 / A3(2) / M145</strain>
    </source>
</reference>
<dbReference type="EC" id="1.3.1.98" evidence="1"/>
<dbReference type="EMBL" id="AL939120">
    <property type="protein sequence ID" value="CAB77417.1"/>
    <property type="molecule type" value="Genomic_DNA"/>
</dbReference>
<dbReference type="RefSeq" id="NP_628804.1">
    <property type="nucleotide sequence ID" value="NC_003888.3"/>
</dbReference>
<dbReference type="SMR" id="Q9L0L7"/>
<dbReference type="FunCoup" id="Q9L0L7">
    <property type="interactions" value="100"/>
</dbReference>
<dbReference type="STRING" id="100226.gene:17762291"/>
<dbReference type="PaxDb" id="100226-SCO4643"/>
<dbReference type="KEGG" id="sco:SCO4643"/>
<dbReference type="PATRIC" id="fig|100226.15.peg.4714"/>
<dbReference type="eggNOG" id="COG0812">
    <property type="taxonomic scope" value="Bacteria"/>
</dbReference>
<dbReference type="HOGENOM" id="CLU_035304_0_1_11"/>
<dbReference type="InParanoid" id="Q9L0L7"/>
<dbReference type="OrthoDB" id="9804753at2"/>
<dbReference type="PhylomeDB" id="Q9L0L7"/>
<dbReference type="UniPathway" id="UPA00219"/>
<dbReference type="Proteomes" id="UP000001973">
    <property type="component" value="Chromosome"/>
</dbReference>
<dbReference type="GO" id="GO:0005829">
    <property type="term" value="C:cytosol"/>
    <property type="evidence" value="ECO:0000318"/>
    <property type="project" value="GO_Central"/>
</dbReference>
<dbReference type="GO" id="GO:0071949">
    <property type="term" value="F:FAD binding"/>
    <property type="evidence" value="ECO:0007669"/>
    <property type="project" value="InterPro"/>
</dbReference>
<dbReference type="GO" id="GO:0050660">
    <property type="term" value="F:flavin adenine dinucleotide binding"/>
    <property type="evidence" value="ECO:0000318"/>
    <property type="project" value="GO_Central"/>
</dbReference>
<dbReference type="GO" id="GO:0008762">
    <property type="term" value="F:UDP-N-acetylmuramate dehydrogenase activity"/>
    <property type="evidence" value="ECO:0000318"/>
    <property type="project" value="GO_Central"/>
</dbReference>
<dbReference type="GO" id="GO:0051301">
    <property type="term" value="P:cell division"/>
    <property type="evidence" value="ECO:0007669"/>
    <property type="project" value="UniProtKB-KW"/>
</dbReference>
<dbReference type="GO" id="GO:0071555">
    <property type="term" value="P:cell wall organization"/>
    <property type="evidence" value="ECO:0000318"/>
    <property type="project" value="GO_Central"/>
</dbReference>
<dbReference type="GO" id="GO:0009252">
    <property type="term" value="P:peptidoglycan biosynthetic process"/>
    <property type="evidence" value="ECO:0007669"/>
    <property type="project" value="UniProtKB-UniRule"/>
</dbReference>
<dbReference type="GO" id="GO:0008360">
    <property type="term" value="P:regulation of cell shape"/>
    <property type="evidence" value="ECO:0007669"/>
    <property type="project" value="UniProtKB-KW"/>
</dbReference>
<dbReference type="Gene3D" id="3.30.465.10">
    <property type="match status" value="1"/>
</dbReference>
<dbReference type="Gene3D" id="3.90.78.10">
    <property type="entry name" value="UDP-N-acetylenolpyruvoylglucosamine reductase, C-terminal domain"/>
    <property type="match status" value="1"/>
</dbReference>
<dbReference type="Gene3D" id="3.30.43.10">
    <property type="entry name" value="Uridine Diphospho-n-acetylenolpyruvylglucosamine Reductase, domain 2"/>
    <property type="match status" value="1"/>
</dbReference>
<dbReference type="HAMAP" id="MF_00037">
    <property type="entry name" value="MurB"/>
    <property type="match status" value="1"/>
</dbReference>
<dbReference type="InterPro" id="IPR016166">
    <property type="entry name" value="FAD-bd_PCMH"/>
</dbReference>
<dbReference type="InterPro" id="IPR036318">
    <property type="entry name" value="FAD-bd_PCMH-like_sf"/>
</dbReference>
<dbReference type="InterPro" id="IPR016167">
    <property type="entry name" value="FAD-bd_PCMH_sub1"/>
</dbReference>
<dbReference type="InterPro" id="IPR016169">
    <property type="entry name" value="FAD-bd_PCMH_sub2"/>
</dbReference>
<dbReference type="InterPro" id="IPR003170">
    <property type="entry name" value="MurB"/>
</dbReference>
<dbReference type="InterPro" id="IPR011601">
    <property type="entry name" value="MurB_C"/>
</dbReference>
<dbReference type="InterPro" id="IPR036635">
    <property type="entry name" value="MurB_C_sf"/>
</dbReference>
<dbReference type="InterPro" id="IPR006094">
    <property type="entry name" value="Oxid_FAD_bind_N"/>
</dbReference>
<dbReference type="NCBIfam" id="TIGR00179">
    <property type="entry name" value="murB"/>
    <property type="match status" value="1"/>
</dbReference>
<dbReference type="NCBIfam" id="NF010478">
    <property type="entry name" value="PRK13903.1"/>
    <property type="match status" value="1"/>
</dbReference>
<dbReference type="PANTHER" id="PTHR21071">
    <property type="entry name" value="UDP-N-ACETYLENOLPYRUVOYLGLUCOSAMINE REDUCTASE"/>
    <property type="match status" value="1"/>
</dbReference>
<dbReference type="PANTHER" id="PTHR21071:SF4">
    <property type="entry name" value="UDP-N-ACETYLENOLPYRUVOYLGLUCOSAMINE REDUCTASE"/>
    <property type="match status" value="1"/>
</dbReference>
<dbReference type="Pfam" id="PF01565">
    <property type="entry name" value="FAD_binding_4"/>
    <property type="match status" value="1"/>
</dbReference>
<dbReference type="Pfam" id="PF02873">
    <property type="entry name" value="MurB_C"/>
    <property type="match status" value="1"/>
</dbReference>
<dbReference type="SUPFAM" id="SSF56176">
    <property type="entry name" value="FAD-binding/transporter-associated domain-like"/>
    <property type="match status" value="1"/>
</dbReference>
<dbReference type="SUPFAM" id="SSF56194">
    <property type="entry name" value="Uridine diphospho-N-Acetylenolpyruvylglucosamine reductase, MurB, C-terminal domain"/>
    <property type="match status" value="1"/>
</dbReference>
<dbReference type="PROSITE" id="PS51387">
    <property type="entry name" value="FAD_PCMH"/>
    <property type="match status" value="1"/>
</dbReference>
<organism>
    <name type="scientific">Streptomyces coelicolor (strain ATCC BAA-471 / A3(2) / M145)</name>
    <dbReference type="NCBI Taxonomy" id="100226"/>
    <lineage>
        <taxon>Bacteria</taxon>
        <taxon>Bacillati</taxon>
        <taxon>Actinomycetota</taxon>
        <taxon>Actinomycetes</taxon>
        <taxon>Kitasatosporales</taxon>
        <taxon>Streptomycetaceae</taxon>
        <taxon>Streptomyces</taxon>
        <taxon>Streptomyces albidoflavus group</taxon>
    </lineage>
</organism>
<accession>Q9L0L7</accession>
<protein>
    <recommendedName>
        <fullName evidence="1">UDP-N-acetylenolpyruvoylglucosamine reductase</fullName>
        <ecNumber evidence="1">1.3.1.98</ecNumber>
    </recommendedName>
    <alternativeName>
        <fullName evidence="1">UDP-N-acetylmuramate dehydrogenase</fullName>
    </alternativeName>
</protein>
<keyword id="KW-0131">Cell cycle</keyword>
<keyword id="KW-0132">Cell division</keyword>
<keyword id="KW-0133">Cell shape</keyword>
<keyword id="KW-0961">Cell wall biogenesis/degradation</keyword>
<keyword id="KW-0963">Cytoplasm</keyword>
<keyword id="KW-0274">FAD</keyword>
<keyword id="KW-0285">Flavoprotein</keyword>
<keyword id="KW-0521">NADP</keyword>
<keyword id="KW-0560">Oxidoreductase</keyword>
<keyword id="KW-0573">Peptidoglycan synthesis</keyword>
<keyword id="KW-1185">Reference proteome</keyword>
<gene>
    <name evidence="1" type="primary">murB</name>
    <name type="ordered locus">SCO4643</name>
    <name type="ORF">SCD82.14</name>
</gene>
<proteinExistence type="inferred from homology"/>
<sequence length="383" mass="40364">MRTRRDVPADRSGRSRVSRHPGLSVPSRTLEPVQELHDAPLAPLTTFRLGGPATRLLTATTDAEVIAAVREADDTGTPLLLIGGGSNLVIGDKGFDGTALHIATRGFRLDGTTLELAAGEIWTDAVARTVEAGLAGVECLAGIPGSAGATPIQNVGAYGQEVSATITEVTAYDRRSGETVALSNADCAFSYRHSRFKAEPERYVVLRVRFELENADGLSAPLRYAETARALGVEAGDRVPLTAARETVLRLRAGKGMVLDPEDHDTWSAGSFFTNPILTDEEFAAFRSRVAGRLGAAVEPPAFPAGEGRVKTSAAWLIDKAGFTKGYGTGPARISTKHTLALTNRGEATTEDLLALAREVVAGVHEAFGVTLVNEPVTVGVAL</sequence>
<feature type="chain" id="PRO_0000179268" description="UDP-N-acetylenolpyruvoylglucosamine reductase">
    <location>
        <begin position="1"/>
        <end position="383"/>
    </location>
</feature>
<feature type="domain" description="FAD-binding PCMH-type" evidence="1">
    <location>
        <begin position="49"/>
        <end position="215"/>
    </location>
</feature>
<feature type="region of interest" description="Disordered" evidence="2">
    <location>
        <begin position="1"/>
        <end position="26"/>
    </location>
</feature>
<feature type="compositionally biased region" description="Basic and acidic residues" evidence="2">
    <location>
        <begin position="1"/>
        <end position="13"/>
    </location>
</feature>
<feature type="active site" evidence="1">
    <location>
        <position position="192"/>
    </location>
</feature>
<feature type="active site" description="Proton donor" evidence="1">
    <location>
        <position position="271"/>
    </location>
</feature>
<feature type="active site" evidence="1">
    <location>
        <position position="375"/>
    </location>
</feature>
<evidence type="ECO:0000255" key="1">
    <source>
        <dbReference type="HAMAP-Rule" id="MF_00037"/>
    </source>
</evidence>
<evidence type="ECO:0000256" key="2">
    <source>
        <dbReference type="SAM" id="MobiDB-lite"/>
    </source>
</evidence>
<comment type="function">
    <text evidence="1">Cell wall formation.</text>
</comment>
<comment type="catalytic activity">
    <reaction evidence="1">
        <text>UDP-N-acetyl-alpha-D-muramate + NADP(+) = UDP-N-acetyl-3-O-(1-carboxyvinyl)-alpha-D-glucosamine + NADPH + H(+)</text>
        <dbReference type="Rhea" id="RHEA:12248"/>
        <dbReference type="ChEBI" id="CHEBI:15378"/>
        <dbReference type="ChEBI" id="CHEBI:57783"/>
        <dbReference type="ChEBI" id="CHEBI:58349"/>
        <dbReference type="ChEBI" id="CHEBI:68483"/>
        <dbReference type="ChEBI" id="CHEBI:70757"/>
        <dbReference type="EC" id="1.3.1.98"/>
    </reaction>
</comment>
<comment type="cofactor">
    <cofactor evidence="1">
        <name>FAD</name>
        <dbReference type="ChEBI" id="CHEBI:57692"/>
    </cofactor>
</comment>
<comment type="pathway">
    <text evidence="1">Cell wall biogenesis; peptidoglycan biosynthesis.</text>
</comment>
<comment type="subcellular location">
    <subcellularLocation>
        <location evidence="1">Cytoplasm</location>
    </subcellularLocation>
</comment>
<comment type="similarity">
    <text evidence="1">Belongs to the MurB family.</text>
</comment>
<name>MURB_STRCO</name>